<evidence type="ECO:0000250" key="1">
    <source>
        <dbReference type="UniProtKB" id="Q8K3F7"/>
    </source>
</evidence>
<evidence type="ECO:0000269" key="2">
    <source>
    </source>
</evidence>
<evidence type="ECO:0000305" key="3"/>
<evidence type="ECO:0000305" key="4">
    <source>
    </source>
</evidence>
<evidence type="ECO:0000312" key="5">
    <source>
        <dbReference type="EMBL" id="AAM18208.1"/>
    </source>
</evidence>
<dbReference type="EC" id="1.1.1.103" evidence="2"/>
<dbReference type="EMBL" id="AY095535">
    <property type="protein sequence ID" value="AAM18208.1"/>
    <property type="molecule type" value="mRNA"/>
</dbReference>
<dbReference type="RefSeq" id="NP_999169.1">
    <property type="nucleotide sequence ID" value="NM_214004.1"/>
</dbReference>
<dbReference type="RefSeq" id="XP_005658677.1">
    <property type="nucleotide sequence ID" value="XM_005658620.2"/>
</dbReference>
<dbReference type="RefSeq" id="XP_005658678.1">
    <property type="nucleotide sequence ID" value="XM_005658621.3"/>
</dbReference>
<dbReference type="RefSeq" id="XP_020927749.1">
    <property type="nucleotide sequence ID" value="XM_021072090.1"/>
</dbReference>
<dbReference type="RefSeq" id="XP_020927750.1">
    <property type="nucleotide sequence ID" value="XM_021072091.1"/>
</dbReference>
<dbReference type="RefSeq" id="XP_020927751.1">
    <property type="nucleotide sequence ID" value="XM_021072092.1"/>
</dbReference>
<dbReference type="RefSeq" id="XP_020927752.1">
    <property type="nucleotide sequence ID" value="XM_021072093.1"/>
</dbReference>
<dbReference type="SMR" id="Q8MIR0"/>
<dbReference type="FunCoup" id="Q8MIR0">
    <property type="interactions" value="21"/>
</dbReference>
<dbReference type="STRING" id="9823.ENSSSCP00000028187"/>
<dbReference type="GlyGen" id="Q8MIR0">
    <property type="glycosylation" value="1 site"/>
</dbReference>
<dbReference type="PaxDb" id="9823-ENSSSCP00000028187"/>
<dbReference type="PeptideAtlas" id="Q8MIR0"/>
<dbReference type="Ensembl" id="ENSSSCT00000022297.4">
    <property type="protein sequence ID" value="ENSSSCP00000028187.1"/>
    <property type="gene ID" value="ENSSSCG00000021767.4"/>
</dbReference>
<dbReference type="Ensembl" id="ENSSSCT00015035385.1">
    <property type="protein sequence ID" value="ENSSSCP00015014081.1"/>
    <property type="gene ID" value="ENSSSCG00015026648.1"/>
</dbReference>
<dbReference type="Ensembl" id="ENSSSCT00030001476.1">
    <property type="protein sequence ID" value="ENSSSCP00030000654.1"/>
    <property type="gene ID" value="ENSSSCG00030001111.1"/>
</dbReference>
<dbReference type="Ensembl" id="ENSSSCT00040072875.1">
    <property type="protein sequence ID" value="ENSSSCP00040031158.1"/>
    <property type="gene ID" value="ENSSSCG00040053878.1"/>
</dbReference>
<dbReference type="Ensembl" id="ENSSSCT00045034071.1">
    <property type="protein sequence ID" value="ENSSSCP00045023642.1"/>
    <property type="gene ID" value="ENSSSCG00045019984.1"/>
</dbReference>
<dbReference type="Ensembl" id="ENSSSCT00050013278.1">
    <property type="protein sequence ID" value="ENSSSCP00050005490.1"/>
    <property type="gene ID" value="ENSSSCG00050009861.1"/>
</dbReference>
<dbReference type="Ensembl" id="ENSSSCT00060089223.1">
    <property type="protein sequence ID" value="ENSSSCP00060038629.1"/>
    <property type="gene ID" value="ENSSSCG00060065355.1"/>
</dbReference>
<dbReference type="Ensembl" id="ENSSSCT00105013182">
    <property type="protein sequence ID" value="ENSSSCP00105009673"/>
    <property type="gene ID" value="ENSSSCG00105006523"/>
</dbReference>
<dbReference type="Ensembl" id="ENSSSCT00110071340">
    <property type="protein sequence ID" value="ENSSSCP00110050207"/>
    <property type="gene ID" value="ENSSSCG00110037531"/>
</dbReference>
<dbReference type="GeneID" id="397065"/>
<dbReference type="KEGG" id="ssc:397065"/>
<dbReference type="CTD" id="157739"/>
<dbReference type="VGNC" id="VGNC:109162">
    <property type="gene designation" value="TDH"/>
</dbReference>
<dbReference type="eggNOG" id="KOG2774">
    <property type="taxonomic scope" value="Eukaryota"/>
</dbReference>
<dbReference type="GeneTree" id="ENSGT00390000014037"/>
<dbReference type="HOGENOM" id="CLU_007383_19_1_1"/>
<dbReference type="InParanoid" id="Q8MIR0"/>
<dbReference type="OMA" id="HWHASPR"/>
<dbReference type="OrthoDB" id="10058185at2759"/>
<dbReference type="TreeFam" id="TF314544"/>
<dbReference type="BRENDA" id="1.1.1.103">
    <property type="organism ID" value="6170"/>
</dbReference>
<dbReference type="UniPathway" id="UPA00046">
    <property type="reaction ID" value="UER00505"/>
</dbReference>
<dbReference type="Proteomes" id="UP000008227">
    <property type="component" value="Chromosome 14"/>
</dbReference>
<dbReference type="Proteomes" id="UP000314985">
    <property type="component" value="Unplaced"/>
</dbReference>
<dbReference type="Proteomes" id="UP000694570">
    <property type="component" value="Unplaced"/>
</dbReference>
<dbReference type="Proteomes" id="UP000694571">
    <property type="component" value="Unplaced"/>
</dbReference>
<dbReference type="Proteomes" id="UP000694720">
    <property type="component" value="Unplaced"/>
</dbReference>
<dbReference type="Proteomes" id="UP000694722">
    <property type="component" value="Unplaced"/>
</dbReference>
<dbReference type="Proteomes" id="UP000694723">
    <property type="component" value="Unplaced"/>
</dbReference>
<dbReference type="Proteomes" id="UP000694724">
    <property type="component" value="Unplaced"/>
</dbReference>
<dbReference type="Proteomes" id="UP000694725">
    <property type="component" value="Unplaced"/>
</dbReference>
<dbReference type="Proteomes" id="UP000694726">
    <property type="component" value="Unplaced"/>
</dbReference>
<dbReference type="Proteomes" id="UP000694727">
    <property type="component" value="Unplaced"/>
</dbReference>
<dbReference type="Proteomes" id="UP000694728">
    <property type="component" value="Unplaced"/>
</dbReference>
<dbReference type="Bgee" id="ENSSSCG00000021767">
    <property type="expression patterns" value="Expressed in right lobe of liver and 18 other cell types or tissues"/>
</dbReference>
<dbReference type="ExpressionAtlas" id="Q8MIR0">
    <property type="expression patterns" value="baseline and differential"/>
</dbReference>
<dbReference type="GO" id="GO:0005739">
    <property type="term" value="C:mitochondrion"/>
    <property type="evidence" value="ECO:0007669"/>
    <property type="project" value="UniProtKB-SubCell"/>
</dbReference>
<dbReference type="GO" id="GO:0042802">
    <property type="term" value="F:identical protein binding"/>
    <property type="evidence" value="ECO:0000250"/>
    <property type="project" value="UniProtKB"/>
</dbReference>
<dbReference type="GO" id="GO:0008743">
    <property type="term" value="F:L-threonine 3-dehydrogenase activity"/>
    <property type="evidence" value="ECO:0000250"/>
    <property type="project" value="UniProtKB"/>
</dbReference>
<dbReference type="GO" id="GO:0019518">
    <property type="term" value="P:L-threonine catabolic process to glycine"/>
    <property type="evidence" value="ECO:0007669"/>
    <property type="project" value="UniProtKB-UniPathway"/>
</dbReference>
<dbReference type="GO" id="GO:0006567">
    <property type="term" value="P:threonine catabolic process"/>
    <property type="evidence" value="ECO:0000250"/>
    <property type="project" value="UniProtKB"/>
</dbReference>
<dbReference type="CDD" id="cd05272">
    <property type="entry name" value="TDH_SDR_e"/>
    <property type="match status" value="1"/>
</dbReference>
<dbReference type="FunFam" id="3.40.50.720:FF:000077">
    <property type="entry name" value="L-threonine 3-dehydrogenase, mitochondrial"/>
    <property type="match status" value="1"/>
</dbReference>
<dbReference type="Gene3D" id="3.40.50.720">
    <property type="entry name" value="NAD(P)-binding Rossmann-like Domain"/>
    <property type="match status" value="1"/>
</dbReference>
<dbReference type="InterPro" id="IPR001509">
    <property type="entry name" value="Epimerase_deHydtase"/>
</dbReference>
<dbReference type="InterPro" id="IPR036291">
    <property type="entry name" value="NAD(P)-bd_dom_sf"/>
</dbReference>
<dbReference type="InterPro" id="IPR051225">
    <property type="entry name" value="NAD(P)_epim/dehydratase"/>
</dbReference>
<dbReference type="PANTHER" id="PTHR42687">
    <property type="entry name" value="L-THREONINE 3-DEHYDROGENASE"/>
    <property type="match status" value="1"/>
</dbReference>
<dbReference type="PANTHER" id="PTHR42687:SF1">
    <property type="entry name" value="L-THREONINE 3-DEHYDROGENASE, MITOCHONDRIAL"/>
    <property type="match status" value="1"/>
</dbReference>
<dbReference type="Pfam" id="PF01370">
    <property type="entry name" value="Epimerase"/>
    <property type="match status" value="1"/>
</dbReference>
<dbReference type="SUPFAM" id="SSF51735">
    <property type="entry name" value="NAD(P)-binding Rossmann-fold domains"/>
    <property type="match status" value="1"/>
</dbReference>
<protein>
    <recommendedName>
        <fullName evidence="3">L-threonine 3-dehydrogenase, mitochondrial</fullName>
        <ecNumber evidence="2">1.1.1.103</ecNumber>
    </recommendedName>
</protein>
<reference evidence="5" key="1">
    <citation type="journal article" date="2002" name="BMC Biochem.">
        <title>Molecular cloning and tissue distribution of mammalian L-threonine 3-dehydrogenases.</title>
        <authorList>
            <person name="Edgar A.J."/>
        </authorList>
    </citation>
    <scope>NUCLEOTIDE SEQUENCE [MRNA]</scope>
</reference>
<reference evidence="3" key="2">
    <citation type="journal article" date="1994" name="Protein Expr. Purif.">
        <title>Purification and structural characterization of porcine L-threonine dehydrogenase.</title>
        <authorList>
            <person name="Kao Y.-C."/>
            <person name="Davis L."/>
        </authorList>
    </citation>
    <scope>PROTEIN SEQUENCE OF 51-111; 145-180; 200-218; 222-249 AND 274-342</scope>
    <scope>FUNCTION</scope>
    <scope>CATALYTIC ACTIVITY</scope>
    <scope>PATHWAY</scope>
    <scope>SUBCELLULAR LOCATION</scope>
</reference>
<keyword id="KW-0903">Direct protein sequencing</keyword>
<keyword id="KW-0496">Mitochondrion</keyword>
<keyword id="KW-0520">NAD</keyword>
<keyword id="KW-0560">Oxidoreductase</keyword>
<keyword id="KW-1185">Reference proteome</keyword>
<keyword id="KW-0809">Transit peptide</keyword>
<name>TDH_PIG</name>
<comment type="function">
    <text evidence="2">Catalyzes the NAD(+)-dependent oxidation of L-threonine to 2-amino-3-ketobutyrate, mediating L-threonine catabolism.</text>
</comment>
<comment type="catalytic activity">
    <reaction evidence="2">
        <text>L-threonine + NAD(+) = (2S)-2-amino-3-oxobutanoate + NADH + H(+)</text>
        <dbReference type="Rhea" id="RHEA:13161"/>
        <dbReference type="ChEBI" id="CHEBI:15378"/>
        <dbReference type="ChEBI" id="CHEBI:57540"/>
        <dbReference type="ChEBI" id="CHEBI:57926"/>
        <dbReference type="ChEBI" id="CHEBI:57945"/>
        <dbReference type="ChEBI" id="CHEBI:78948"/>
        <dbReference type="EC" id="1.1.1.103"/>
    </reaction>
</comment>
<comment type="pathway">
    <text evidence="4">Amino-acid degradation; L-threonine degradation via oxydo-reductase pathway; glycine from L-threonine: step 1/2.</text>
</comment>
<comment type="subunit">
    <text evidence="1">Homodimer.</text>
</comment>
<comment type="subcellular location">
    <subcellularLocation>
        <location evidence="2">Mitochondrion</location>
    </subcellularLocation>
</comment>
<comment type="similarity">
    <text evidence="3">Belongs to the NAD(P)-dependent epimerase/dehydratase family.</text>
</comment>
<feature type="transit peptide" description="Mitochondrion" evidence="3">
    <location>
        <begin position="1"/>
        <end status="unknown"/>
    </location>
</feature>
<feature type="chain" id="PRO_0000298785" description="L-threonine 3-dehydrogenase, mitochondrial">
    <location>
        <begin status="unknown"/>
        <end position="373"/>
    </location>
</feature>
<feature type="active site" description="Proton donor/acceptor" evidence="1">
    <location>
        <position position="195"/>
    </location>
</feature>
<feature type="binding site" evidence="1">
    <location>
        <begin position="62"/>
        <end position="67"/>
    </location>
    <ligand>
        <name>NAD(+)</name>
        <dbReference type="ChEBI" id="CHEBI:57540"/>
    </ligand>
</feature>
<feature type="binding site" evidence="1">
    <location>
        <begin position="88"/>
        <end position="90"/>
    </location>
    <ligand>
        <name>NAD(+)</name>
        <dbReference type="ChEBI" id="CHEBI:57540"/>
    </ligand>
</feature>
<feature type="binding site" evidence="1">
    <location>
        <begin position="106"/>
        <end position="107"/>
    </location>
    <ligand>
        <name>NAD(+)</name>
        <dbReference type="ChEBI" id="CHEBI:57540"/>
    </ligand>
</feature>
<feature type="binding site" evidence="1">
    <location>
        <position position="195"/>
    </location>
    <ligand>
        <name>NAD(+)</name>
        <dbReference type="ChEBI" id="CHEBI:57540"/>
    </ligand>
</feature>
<feature type="binding site" evidence="1">
    <location>
        <position position="199"/>
    </location>
    <ligand>
        <name>NAD(+)</name>
        <dbReference type="ChEBI" id="CHEBI:57540"/>
    </ligand>
</feature>
<feature type="binding site" evidence="1">
    <location>
        <position position="225"/>
    </location>
    <ligand>
        <name>NAD(+)</name>
        <dbReference type="ChEBI" id="CHEBI:57540"/>
    </ligand>
</feature>
<feature type="sequence conflict" description="In Ref. 2; AA sequence." evidence="3" ref="2">
    <original>G</original>
    <variation>Q</variation>
    <location>
        <position position="65"/>
    </location>
</feature>
<feature type="sequence conflict" description="In Ref. 2; AA sequence." evidence="3" ref="2">
    <original>K</original>
    <variation>R</variation>
    <location>
        <position position="309"/>
    </location>
</feature>
<feature type="sequence conflict" description="In Ref. 2; AA sequence." evidence="3" ref="2">
    <original>W</original>
    <variation>I</variation>
    <location>
        <position position="331"/>
    </location>
</feature>
<feature type="sequence conflict" description="In Ref. 2; AA sequence." evidence="3" ref="2">
    <original>R</original>
    <variation>A</variation>
    <location>
        <position position="341"/>
    </location>
</feature>
<organism>
    <name type="scientific">Sus scrofa</name>
    <name type="common">Pig</name>
    <dbReference type="NCBI Taxonomy" id="9823"/>
    <lineage>
        <taxon>Eukaryota</taxon>
        <taxon>Metazoa</taxon>
        <taxon>Chordata</taxon>
        <taxon>Craniata</taxon>
        <taxon>Vertebrata</taxon>
        <taxon>Euteleostomi</taxon>
        <taxon>Mammalia</taxon>
        <taxon>Eutheria</taxon>
        <taxon>Laurasiatheria</taxon>
        <taxon>Artiodactyla</taxon>
        <taxon>Suina</taxon>
        <taxon>Suidae</taxon>
        <taxon>Sus</taxon>
    </lineage>
</organism>
<sequence>MPVVKMLKQVASRTLGSPACGCQPPTLPRRFLGTSPRQIPADANFHSTSFSEANQPRVLITGGLGQLGVGLASLLRKRFGKDNVILSDIRKPPEHVFLSGPFIYSDILDYKNLREIVVNNRVTWLFHYSALLSAVGEANVSLARAVNITGLHNVLDVAAEHGLRLFVPSTIGAFGPTSPRNPTPDLCIQRPRTIYGVSKVHAELMGEYYYYRYGLDFRCLRYPGIISADSQPGGGTTDYAVQIFQDAVKNGRFECNLNPGTKLPMMYIDDCLRATLEVMEAPAEALSLRTYNVNAMSFTPAELAQEVLKHIPEFQITYNVDSVRQAIADSWPMNFDDSTARRDWGWKHDFDLPELVTTMLNFHGAHSRVAQAN</sequence>
<accession>Q8MIR0</accession>
<proteinExistence type="evidence at protein level"/>
<gene>
    <name evidence="5" type="primary">TDH</name>
</gene>